<dbReference type="EC" id="2.1.1.-" evidence="1"/>
<dbReference type="EC" id="2.1.1.35" evidence="1"/>
<dbReference type="EMBL" id="AL111168">
    <property type="protein sequence ID" value="CAL34959.1"/>
    <property type="molecule type" value="Genomic_DNA"/>
</dbReference>
<dbReference type="PIR" id="G81355">
    <property type="entry name" value="G81355"/>
</dbReference>
<dbReference type="RefSeq" id="WP_002890843.1">
    <property type="nucleotide sequence ID" value="NZ_SZUC01000001.1"/>
</dbReference>
<dbReference type="RefSeq" id="YP_002344238.1">
    <property type="nucleotide sequence ID" value="NC_002163.1"/>
</dbReference>
<dbReference type="SMR" id="Q9PP92"/>
<dbReference type="STRING" id="192222.Cj0831c"/>
<dbReference type="PaxDb" id="192222-Cj0831c"/>
<dbReference type="EnsemblBacteria" id="CAL34959">
    <property type="protein sequence ID" value="CAL34959"/>
    <property type="gene ID" value="Cj0831c"/>
</dbReference>
<dbReference type="GeneID" id="905134"/>
<dbReference type="KEGG" id="cje:Cj0831c"/>
<dbReference type="PATRIC" id="fig|192222.6.peg.819"/>
<dbReference type="eggNOG" id="COG2265">
    <property type="taxonomic scope" value="Bacteria"/>
</dbReference>
<dbReference type="HOGENOM" id="CLU_043022_1_0_7"/>
<dbReference type="OrthoDB" id="9804590at2"/>
<dbReference type="Proteomes" id="UP000000799">
    <property type="component" value="Chromosome"/>
</dbReference>
<dbReference type="GO" id="GO:0005829">
    <property type="term" value="C:cytosol"/>
    <property type="evidence" value="ECO:0007669"/>
    <property type="project" value="TreeGrafter"/>
</dbReference>
<dbReference type="GO" id="GO:0019843">
    <property type="term" value="F:rRNA binding"/>
    <property type="evidence" value="ECO:0007669"/>
    <property type="project" value="TreeGrafter"/>
</dbReference>
<dbReference type="GO" id="GO:0030697">
    <property type="term" value="F:tRNA (uracil(54)-C5)-methyltransferase activity, S-adenosyl methionine-dependent"/>
    <property type="evidence" value="ECO:0007669"/>
    <property type="project" value="UniProtKB-EC"/>
</dbReference>
<dbReference type="GO" id="GO:0000049">
    <property type="term" value="F:tRNA binding"/>
    <property type="evidence" value="ECO:0007669"/>
    <property type="project" value="TreeGrafter"/>
</dbReference>
<dbReference type="GO" id="GO:0032259">
    <property type="term" value="P:methylation"/>
    <property type="evidence" value="ECO:0007669"/>
    <property type="project" value="UniProtKB-KW"/>
</dbReference>
<dbReference type="GO" id="GO:0008033">
    <property type="term" value="P:tRNA processing"/>
    <property type="evidence" value="ECO:0007669"/>
    <property type="project" value="UniProtKB-KW"/>
</dbReference>
<dbReference type="CDD" id="cd02440">
    <property type="entry name" value="AdoMet_MTases"/>
    <property type="match status" value="1"/>
</dbReference>
<dbReference type="FunFam" id="3.40.50.150:FF:000012">
    <property type="entry name" value="tRNA/tmRNA (uracil-C(5))-methyltransferase"/>
    <property type="match status" value="1"/>
</dbReference>
<dbReference type="Gene3D" id="2.40.50.1070">
    <property type="match status" value="1"/>
</dbReference>
<dbReference type="Gene3D" id="3.40.50.150">
    <property type="entry name" value="Vaccinia Virus protein VP39"/>
    <property type="match status" value="1"/>
</dbReference>
<dbReference type="HAMAP" id="MF_01011">
    <property type="entry name" value="RNA_methyltr_TrmA"/>
    <property type="match status" value="1"/>
</dbReference>
<dbReference type="InterPro" id="IPR030390">
    <property type="entry name" value="MeTrfase_TrmA_AS"/>
</dbReference>
<dbReference type="InterPro" id="IPR029063">
    <property type="entry name" value="SAM-dependent_MTases_sf"/>
</dbReference>
<dbReference type="InterPro" id="IPR011869">
    <property type="entry name" value="TrmA_MeTrfase"/>
</dbReference>
<dbReference type="InterPro" id="IPR010280">
    <property type="entry name" value="U5_MeTrfase_fam"/>
</dbReference>
<dbReference type="NCBIfam" id="TIGR02143">
    <property type="entry name" value="trmA_only"/>
    <property type="match status" value="1"/>
</dbReference>
<dbReference type="PANTHER" id="PTHR47790">
    <property type="entry name" value="TRNA/TMRNA (URACIL-C(5))-METHYLTRANSFERASE"/>
    <property type="match status" value="1"/>
</dbReference>
<dbReference type="PANTHER" id="PTHR47790:SF2">
    <property type="entry name" value="TRNA_TMRNA (URACIL-C(5))-METHYLTRANSFERASE"/>
    <property type="match status" value="1"/>
</dbReference>
<dbReference type="Pfam" id="PF05958">
    <property type="entry name" value="tRNA_U5-meth_tr"/>
    <property type="match status" value="1"/>
</dbReference>
<dbReference type="SUPFAM" id="SSF53335">
    <property type="entry name" value="S-adenosyl-L-methionine-dependent methyltransferases"/>
    <property type="match status" value="1"/>
</dbReference>
<dbReference type="PROSITE" id="PS51687">
    <property type="entry name" value="SAM_MT_RNA_M5U"/>
    <property type="match status" value="1"/>
</dbReference>
<dbReference type="PROSITE" id="PS01230">
    <property type="entry name" value="TRMA_1"/>
    <property type="match status" value="1"/>
</dbReference>
<organism>
    <name type="scientific">Campylobacter jejuni subsp. jejuni serotype O:2 (strain ATCC 700819 / NCTC 11168)</name>
    <dbReference type="NCBI Taxonomy" id="192222"/>
    <lineage>
        <taxon>Bacteria</taxon>
        <taxon>Pseudomonadati</taxon>
        <taxon>Campylobacterota</taxon>
        <taxon>Epsilonproteobacteria</taxon>
        <taxon>Campylobacterales</taxon>
        <taxon>Campylobacteraceae</taxon>
        <taxon>Campylobacter</taxon>
    </lineage>
</organism>
<protein>
    <recommendedName>
        <fullName evidence="1">tRNA/tmRNA (uracil-C(5))-methyltransferase</fullName>
        <ecNumber evidence="1">2.1.1.-</ecNumber>
        <ecNumber evidence="1">2.1.1.35</ecNumber>
    </recommendedName>
    <alternativeName>
        <fullName evidence="1">tRNA (uracil(54)-C(5))-methyltransferase</fullName>
    </alternativeName>
    <alternativeName>
        <fullName evidence="1">tRNA(m5U54)-methyltransferase</fullName>
        <shortName evidence="1">RUMT</shortName>
    </alternativeName>
    <alternativeName>
        <fullName evidence="1">tmRNA (uracil(341)-C(5))-methyltransferase</fullName>
    </alternativeName>
</protein>
<evidence type="ECO:0000255" key="1">
    <source>
        <dbReference type="HAMAP-Rule" id="MF_01011"/>
    </source>
</evidence>
<accession>Q9PP92</accession>
<accession>Q0PA59</accession>
<reference key="1">
    <citation type="journal article" date="2000" name="Nature">
        <title>The genome sequence of the food-borne pathogen Campylobacter jejuni reveals hypervariable sequences.</title>
        <authorList>
            <person name="Parkhill J."/>
            <person name="Wren B.W."/>
            <person name="Mungall K.L."/>
            <person name="Ketley J.M."/>
            <person name="Churcher C.M."/>
            <person name="Basham D."/>
            <person name="Chillingworth T."/>
            <person name="Davies R.M."/>
            <person name="Feltwell T."/>
            <person name="Holroyd S."/>
            <person name="Jagels K."/>
            <person name="Karlyshev A.V."/>
            <person name="Moule S."/>
            <person name="Pallen M.J."/>
            <person name="Penn C.W."/>
            <person name="Quail M.A."/>
            <person name="Rajandream M.A."/>
            <person name="Rutherford K.M."/>
            <person name="van Vliet A.H.M."/>
            <person name="Whitehead S."/>
            <person name="Barrell B.G."/>
        </authorList>
    </citation>
    <scope>NUCLEOTIDE SEQUENCE [LARGE SCALE GENOMIC DNA]</scope>
    <source>
        <strain>ATCC 700819 / NCTC 11168</strain>
    </source>
</reference>
<keyword id="KW-0489">Methyltransferase</keyword>
<keyword id="KW-1185">Reference proteome</keyword>
<keyword id="KW-0949">S-adenosyl-L-methionine</keyword>
<keyword id="KW-0808">Transferase</keyword>
<keyword id="KW-0819">tRNA processing</keyword>
<comment type="function">
    <text evidence="1">Dual-specificity methyltransferase that catalyzes the formation of 5-methyluridine at position 54 (m5U54) in all tRNAs, and that of position 341 (m5U341) in tmRNA (transfer-mRNA).</text>
</comment>
<comment type="catalytic activity">
    <reaction evidence="1">
        <text>uridine(54) in tRNA + S-adenosyl-L-methionine = 5-methyluridine(54) in tRNA + S-adenosyl-L-homocysteine + H(+)</text>
        <dbReference type="Rhea" id="RHEA:42712"/>
        <dbReference type="Rhea" id="RHEA-COMP:10167"/>
        <dbReference type="Rhea" id="RHEA-COMP:10193"/>
        <dbReference type="ChEBI" id="CHEBI:15378"/>
        <dbReference type="ChEBI" id="CHEBI:57856"/>
        <dbReference type="ChEBI" id="CHEBI:59789"/>
        <dbReference type="ChEBI" id="CHEBI:65315"/>
        <dbReference type="ChEBI" id="CHEBI:74447"/>
        <dbReference type="EC" id="2.1.1.35"/>
    </reaction>
</comment>
<comment type="catalytic activity">
    <reaction evidence="1">
        <text>uridine(341) in tmRNA + S-adenosyl-L-methionine = 5-methyluridine(341) in tmRNA + S-adenosyl-L-homocysteine + H(+)</text>
        <dbReference type="Rhea" id="RHEA:43612"/>
        <dbReference type="Rhea" id="RHEA-COMP:10630"/>
        <dbReference type="Rhea" id="RHEA-COMP:10631"/>
        <dbReference type="ChEBI" id="CHEBI:15378"/>
        <dbReference type="ChEBI" id="CHEBI:57856"/>
        <dbReference type="ChEBI" id="CHEBI:59789"/>
        <dbReference type="ChEBI" id="CHEBI:65315"/>
        <dbReference type="ChEBI" id="CHEBI:74447"/>
    </reaction>
</comment>
<comment type="similarity">
    <text evidence="1">Belongs to the class I-like SAM-binding methyltransferase superfamily. RNA M5U methyltransferase family. TrmA subfamily.</text>
</comment>
<proteinExistence type="inferred from homology"/>
<feature type="chain" id="PRO_0000161858" description="tRNA/tmRNA (uracil-C(5))-methyltransferase">
    <location>
        <begin position="1"/>
        <end position="357"/>
    </location>
</feature>
<feature type="active site" description="Nucleophile" evidence="1">
    <location>
        <position position="315"/>
    </location>
</feature>
<feature type="active site" description="Proton acceptor" evidence="1">
    <location>
        <position position="349"/>
    </location>
</feature>
<feature type="binding site" evidence="1">
    <location>
        <position position="180"/>
    </location>
    <ligand>
        <name>S-adenosyl-L-methionine</name>
        <dbReference type="ChEBI" id="CHEBI:59789"/>
    </ligand>
</feature>
<feature type="binding site" evidence="1">
    <location>
        <position position="209"/>
    </location>
    <ligand>
        <name>S-adenosyl-L-methionine</name>
        <dbReference type="ChEBI" id="CHEBI:59789"/>
    </ligand>
</feature>
<feature type="binding site" evidence="1">
    <location>
        <position position="214"/>
    </location>
    <ligand>
        <name>S-adenosyl-L-methionine</name>
        <dbReference type="ChEBI" id="CHEBI:59789"/>
    </ligand>
</feature>
<feature type="binding site" evidence="1">
    <location>
        <position position="230"/>
    </location>
    <ligand>
        <name>S-adenosyl-L-methionine</name>
        <dbReference type="ChEBI" id="CHEBI:59789"/>
    </ligand>
</feature>
<feature type="binding site" evidence="1">
    <location>
        <position position="290"/>
    </location>
    <ligand>
        <name>S-adenosyl-L-methionine</name>
        <dbReference type="ChEBI" id="CHEBI:59789"/>
    </ligand>
</feature>
<gene>
    <name evidence="1" type="primary">trmA</name>
    <name type="ordered locus">Cj0831c</name>
</gene>
<sequence length="357" mass="42276">MSLENFGNFLTLDEKHSFIKKYFKEFYTKDFKLFASKDKHYRTRAELSFYHENDTLFYAMFDPKSKKKYIIEYLDFADEKICAFMPRLLEYLRQDNKLKEKLFGVEFLTTKQELSITLLYHKNIEDIKSNLENLSNILHINLIARSKGKKLIFKTENLRQTLNIQDRKIFYEFNNDCFIQPNTAINEKMITWVCEILNTQKRMDLLELYCGYGNFTLALAPFFFKILATEISKSNINFALKNCELNNTTNIHFARLSSEELSLAIKKEREFFRLKDIRLDDFNFSHVLVDPPRAGLDKSVIDLIKKYGNIIYISCNPMTLKENLKELSLTHRVEEFALFDQFVNTPHLECGVFLSKV</sequence>
<name>TRMA_CAMJE</name>